<comment type="function">
    <text evidence="1">Required for the regulation of both a MAP kinase signaling pathway and a cAMP signaling pathway. The activation of these pathways contributes to the pathogenicity of the cells through the induction of the morphological transition from the yeast to the polarized filamentous form (By similarity).</text>
</comment>
<comment type="catalytic activity">
    <reaction evidence="2">
        <text>GTP + H2O = GDP + phosphate + H(+)</text>
        <dbReference type="Rhea" id="RHEA:19669"/>
        <dbReference type="ChEBI" id="CHEBI:15377"/>
        <dbReference type="ChEBI" id="CHEBI:15378"/>
        <dbReference type="ChEBI" id="CHEBI:37565"/>
        <dbReference type="ChEBI" id="CHEBI:43474"/>
        <dbReference type="ChEBI" id="CHEBI:58189"/>
        <dbReference type="EC" id="3.6.5.2"/>
    </reaction>
</comment>
<comment type="activity regulation">
    <text>Alternates between an inactive form bound to GDP and an active form bound to GTP. Activated by a guanine nucleotide-exchange factor (GEF) and inactivated by a GTPase-activating protein (GAP).</text>
</comment>
<comment type="subcellular location">
    <subcellularLocation>
        <location evidence="4">Cell membrane</location>
        <topology evidence="4">Lipid-anchor</topology>
        <orientation evidence="4">Cytoplasmic side</orientation>
    </subcellularLocation>
</comment>
<comment type="similarity">
    <text evidence="4">Belongs to the small GTPase superfamily. Ras family.</text>
</comment>
<evidence type="ECO:0000250" key="1"/>
<evidence type="ECO:0000250" key="2">
    <source>
        <dbReference type="UniProtKB" id="P01112"/>
    </source>
</evidence>
<evidence type="ECO:0000256" key="3">
    <source>
        <dbReference type="SAM" id="MobiDB-lite"/>
    </source>
</evidence>
<evidence type="ECO:0000305" key="4"/>
<gene>
    <name type="primary">RAS1</name>
</gene>
<feature type="chain" id="PRO_0000082673" description="Ras-like protein 1">
    <location>
        <begin position="1"/>
        <end position="287"/>
    </location>
</feature>
<feature type="propeptide" id="PRO_0000281321" description="Removed in mature form" evidence="1">
    <location>
        <begin position="288"/>
        <end position="290"/>
    </location>
</feature>
<feature type="region of interest" description="Disordered" evidence="3">
    <location>
        <begin position="176"/>
        <end position="290"/>
    </location>
</feature>
<feature type="short sequence motif" description="Effector region">
    <location>
        <begin position="33"/>
        <end position="41"/>
    </location>
</feature>
<feature type="compositionally biased region" description="Low complexity" evidence="3">
    <location>
        <begin position="178"/>
        <end position="216"/>
    </location>
</feature>
<feature type="compositionally biased region" description="Low complexity" evidence="3">
    <location>
        <begin position="246"/>
        <end position="283"/>
    </location>
</feature>
<feature type="binding site" evidence="1">
    <location>
        <begin position="11"/>
        <end position="18"/>
    </location>
    <ligand>
        <name>GTP</name>
        <dbReference type="ChEBI" id="CHEBI:37565"/>
    </ligand>
</feature>
<feature type="binding site" evidence="1">
    <location>
        <begin position="58"/>
        <end position="62"/>
    </location>
    <ligand>
        <name>GTP</name>
        <dbReference type="ChEBI" id="CHEBI:37565"/>
    </ligand>
</feature>
<feature type="binding site" evidence="1">
    <location>
        <begin position="117"/>
        <end position="120"/>
    </location>
    <ligand>
        <name>GTP</name>
        <dbReference type="ChEBI" id="CHEBI:37565"/>
    </ligand>
</feature>
<feature type="modified residue" description="Cysteine methyl ester" evidence="1">
    <location>
        <position position="287"/>
    </location>
</feature>
<feature type="lipid moiety-binding region" description="S-palmitoyl cysteine" evidence="1">
    <location>
        <position position="286"/>
    </location>
</feature>
<feature type="lipid moiety-binding region" description="S-farnesyl cysteine" evidence="1">
    <location>
        <position position="287"/>
    </location>
</feature>
<organism>
    <name type="scientific">Candida albicans</name>
    <name type="common">Yeast</name>
    <dbReference type="NCBI Taxonomy" id="5476"/>
    <lineage>
        <taxon>Eukaryota</taxon>
        <taxon>Fungi</taxon>
        <taxon>Dikarya</taxon>
        <taxon>Ascomycota</taxon>
        <taxon>Saccharomycotina</taxon>
        <taxon>Pichiomycetes</taxon>
        <taxon>Debaryomycetaceae</taxon>
        <taxon>Candida/Lodderomyces clade</taxon>
        <taxon>Candida</taxon>
    </lineage>
</organism>
<proteinExistence type="inferred from homology"/>
<name>RAS1_CANAX</name>
<reference key="1">
    <citation type="journal article" date="1999" name="J. Bacteriol.">
        <title>Ras signaling is required for serum-induced hyphal differentiation in Candida albicans.</title>
        <authorList>
            <person name="Feng Q."/>
            <person name="Summers E."/>
            <person name="Guo B."/>
            <person name="Fink G."/>
        </authorList>
    </citation>
    <scope>NUCLEOTIDE SEQUENCE [GENOMIC DNA]</scope>
    <source>
        <strain>1006</strain>
    </source>
</reference>
<accession>P0CY32</accession>
<accession>Q9UQX7</accession>
<dbReference type="EC" id="3.6.5.2" evidence="2"/>
<dbReference type="EMBL" id="AF177670">
    <property type="protein sequence ID" value="AAD52662.1"/>
    <property type="molecule type" value="Genomic_DNA"/>
</dbReference>
<dbReference type="SASBDB" id="P0CY32"/>
<dbReference type="SMR" id="P0CY32"/>
<dbReference type="EnsemblFungi" id="C2_10210C_A-T">
    <property type="protein sequence ID" value="C2_10210C_A-T-p1"/>
    <property type="gene ID" value="C2_10210C_A"/>
</dbReference>
<dbReference type="VEuPathDB" id="FungiDB:C2_10210C_A"/>
<dbReference type="VEuPathDB" id="FungiDB:CAWG_06092"/>
<dbReference type="PhylomeDB" id="P0CY32"/>
<dbReference type="GO" id="GO:0051285">
    <property type="term" value="C:cell cortex of cell tip"/>
    <property type="evidence" value="ECO:0007669"/>
    <property type="project" value="EnsemblFungi"/>
</dbReference>
<dbReference type="GO" id="GO:0090726">
    <property type="term" value="C:cortical dynamic polarity patch"/>
    <property type="evidence" value="ECO:0007669"/>
    <property type="project" value="EnsemblFungi"/>
</dbReference>
<dbReference type="GO" id="GO:0000935">
    <property type="term" value="C:division septum"/>
    <property type="evidence" value="ECO:0007669"/>
    <property type="project" value="EnsemblFungi"/>
</dbReference>
<dbReference type="GO" id="GO:1990819">
    <property type="term" value="C:mating projection actin fusion focus"/>
    <property type="evidence" value="ECO:0007669"/>
    <property type="project" value="EnsemblFungi"/>
</dbReference>
<dbReference type="GO" id="GO:0005886">
    <property type="term" value="C:plasma membrane"/>
    <property type="evidence" value="ECO:0007669"/>
    <property type="project" value="UniProtKB-SubCell"/>
</dbReference>
<dbReference type="GO" id="GO:0002135">
    <property type="term" value="F:CTP binding"/>
    <property type="evidence" value="ECO:0007669"/>
    <property type="project" value="EnsemblFungi"/>
</dbReference>
<dbReference type="GO" id="GO:0003925">
    <property type="term" value="F:G protein activity"/>
    <property type="evidence" value="ECO:0007669"/>
    <property type="project" value="UniProtKB-EC"/>
</dbReference>
<dbReference type="GO" id="GO:0019003">
    <property type="term" value="F:GDP binding"/>
    <property type="evidence" value="ECO:0007669"/>
    <property type="project" value="EnsemblFungi"/>
</dbReference>
<dbReference type="GO" id="GO:0005525">
    <property type="term" value="F:GTP binding"/>
    <property type="evidence" value="ECO:0007669"/>
    <property type="project" value="UniProtKB-KW"/>
</dbReference>
<dbReference type="GO" id="GO:0002134">
    <property type="term" value="F:UTP binding"/>
    <property type="evidence" value="ECO:0007669"/>
    <property type="project" value="EnsemblFungi"/>
</dbReference>
<dbReference type="GO" id="GO:0000747">
    <property type="term" value="P:conjugation with cellular fusion"/>
    <property type="evidence" value="ECO:0007669"/>
    <property type="project" value="EnsemblFungi"/>
</dbReference>
<dbReference type="GO" id="GO:0030010">
    <property type="term" value="P:establishment of cell polarity"/>
    <property type="evidence" value="ECO:0007669"/>
    <property type="project" value="EnsemblFungi"/>
</dbReference>
<dbReference type="GO" id="GO:1902917">
    <property type="term" value="P:positive regulation of mating projection assembly"/>
    <property type="evidence" value="ECO:0007669"/>
    <property type="project" value="EnsemblFungi"/>
</dbReference>
<dbReference type="GO" id="GO:0062038">
    <property type="term" value="P:positive regulation of pheromone response MAPK cascade"/>
    <property type="evidence" value="ECO:0007669"/>
    <property type="project" value="EnsemblFungi"/>
</dbReference>
<dbReference type="GO" id="GO:0042307">
    <property type="term" value="P:positive regulation of protein import into nucleus"/>
    <property type="evidence" value="ECO:0007669"/>
    <property type="project" value="EnsemblFungi"/>
</dbReference>
<dbReference type="GO" id="GO:0072659">
    <property type="term" value="P:protein localization to plasma membrane"/>
    <property type="evidence" value="ECO:0007669"/>
    <property type="project" value="EnsemblFungi"/>
</dbReference>
<dbReference type="GO" id="GO:0032005">
    <property type="term" value="P:signal transduction involved in positive regulation of conjugation with cellular fusion"/>
    <property type="evidence" value="ECO:0007669"/>
    <property type="project" value="EnsemblFungi"/>
</dbReference>
<dbReference type="FunFam" id="3.40.50.300:FF:000080">
    <property type="entry name" value="Ras-like GTPase Ras1"/>
    <property type="match status" value="1"/>
</dbReference>
<dbReference type="Gene3D" id="3.40.50.300">
    <property type="entry name" value="P-loop containing nucleotide triphosphate hydrolases"/>
    <property type="match status" value="1"/>
</dbReference>
<dbReference type="InterPro" id="IPR027417">
    <property type="entry name" value="P-loop_NTPase"/>
</dbReference>
<dbReference type="InterPro" id="IPR005225">
    <property type="entry name" value="Small_GTP-bd"/>
</dbReference>
<dbReference type="InterPro" id="IPR001806">
    <property type="entry name" value="Small_GTPase"/>
</dbReference>
<dbReference type="InterPro" id="IPR020849">
    <property type="entry name" value="Small_GTPase_Ras-type"/>
</dbReference>
<dbReference type="NCBIfam" id="TIGR00231">
    <property type="entry name" value="small_GTP"/>
    <property type="match status" value="1"/>
</dbReference>
<dbReference type="PANTHER" id="PTHR24070">
    <property type="entry name" value="RAS, DI-RAS, AND RHEB FAMILY MEMBERS OF SMALL GTPASE SUPERFAMILY"/>
    <property type="match status" value="1"/>
</dbReference>
<dbReference type="Pfam" id="PF00071">
    <property type="entry name" value="Ras"/>
    <property type="match status" value="1"/>
</dbReference>
<dbReference type="PRINTS" id="PR00449">
    <property type="entry name" value="RASTRNSFRMNG"/>
</dbReference>
<dbReference type="SMART" id="SM00175">
    <property type="entry name" value="RAB"/>
    <property type="match status" value="1"/>
</dbReference>
<dbReference type="SMART" id="SM00176">
    <property type="entry name" value="RAN"/>
    <property type="match status" value="1"/>
</dbReference>
<dbReference type="SMART" id="SM00173">
    <property type="entry name" value="RAS"/>
    <property type="match status" value="1"/>
</dbReference>
<dbReference type="SMART" id="SM00174">
    <property type="entry name" value="RHO"/>
    <property type="match status" value="1"/>
</dbReference>
<dbReference type="SUPFAM" id="SSF52540">
    <property type="entry name" value="P-loop containing nucleoside triphosphate hydrolases"/>
    <property type="match status" value="1"/>
</dbReference>
<dbReference type="PROSITE" id="PS51421">
    <property type="entry name" value="RAS"/>
    <property type="match status" value="1"/>
</dbReference>
<protein>
    <recommendedName>
        <fullName>Ras-like protein 1</fullName>
        <ecNumber evidence="2">3.6.5.2</ecNumber>
    </recommendedName>
    <alternativeName>
        <fullName>Ras homolog type B</fullName>
    </alternativeName>
</protein>
<sequence>MLREYKLVVVGGGGVGKSALTIQLIQSHFVDEYDPTIEDSYRKQCTIDDQQVLLDVLDTAGQEEYSAMREQYMRTGEGFLLVYSINSLNSFQELNSFYDQILRVKDSDNVPVLVVGNKCDLEMERQVSYEDGLALANSFNCPFLETSAKQRINVEEAFYGLVRNINQYNAKIAEAEKQQQQQQQQQNANQQGQDQYGQQKDNQQSQFNNQINNNNNTSAVNGGVSSDGIIDQNGNGGVSSGQANLPNQSQSQSQRQQQQQQQEPQQQSENQFSGQKQSSSKSKNGCCVIV</sequence>
<keyword id="KW-1003">Cell membrane</keyword>
<keyword id="KW-0342">GTP-binding</keyword>
<keyword id="KW-0378">Hydrolase</keyword>
<keyword id="KW-0449">Lipoprotein</keyword>
<keyword id="KW-0472">Membrane</keyword>
<keyword id="KW-0488">Methylation</keyword>
<keyword id="KW-0547">Nucleotide-binding</keyword>
<keyword id="KW-0564">Palmitate</keyword>
<keyword id="KW-0636">Prenylation</keyword>